<name>MA8I_SCHJA</name>
<feature type="chain" id="PRO_0000084545" description="Immunogenic miracidial antigen 8I">
    <location>
        <begin position="1"/>
        <end position="139"/>
    </location>
</feature>
<feature type="region of interest" description="Disordered" evidence="1">
    <location>
        <begin position="61"/>
        <end position="139"/>
    </location>
</feature>
<feature type="compositionally biased region" description="Acidic residues" evidence="1">
    <location>
        <begin position="64"/>
        <end position="85"/>
    </location>
</feature>
<feature type="compositionally biased region" description="Polar residues" evidence="1">
    <location>
        <begin position="90"/>
        <end position="103"/>
    </location>
</feature>
<organism>
    <name type="scientific">Schistosoma japonicum</name>
    <name type="common">Blood fluke</name>
    <dbReference type="NCBI Taxonomy" id="6182"/>
    <lineage>
        <taxon>Eukaryota</taxon>
        <taxon>Metazoa</taxon>
        <taxon>Spiralia</taxon>
        <taxon>Lophotrochozoa</taxon>
        <taxon>Platyhelminthes</taxon>
        <taxon>Trematoda</taxon>
        <taxon>Digenea</taxon>
        <taxon>Strigeidida</taxon>
        <taxon>Schistosomatoidea</taxon>
        <taxon>Schistosomatidae</taxon>
        <taxon>Schistosoma</taxon>
    </lineage>
</organism>
<evidence type="ECO:0000256" key="1">
    <source>
        <dbReference type="SAM" id="MobiDB-lite"/>
    </source>
</evidence>
<evidence type="ECO:0000305" key="2"/>
<sequence>MCVRRVDILSRFDIALSLLQSLTHSHTVLRHLCFLPTIIYKHLCEFTISFSSPVISTGQHIDVGDEDYHDGDDDVDYTDDVDDVDDPHGSPSQLLQGGYQRNQHYGGGNYQSGYYRPNKQHGNGYGGQYPKKYGSGYKH</sequence>
<proteinExistence type="evidence at transcript level"/>
<gene>
    <name type="primary">8I</name>
</gene>
<dbReference type="EMBL" id="M26211">
    <property type="protein sequence ID" value="AAA29849.1"/>
    <property type="molecule type" value="Genomic_DNA"/>
</dbReference>
<dbReference type="InterPro" id="IPR026240">
    <property type="entry name" value="Miracidia_Ag_8I"/>
</dbReference>
<dbReference type="PRINTS" id="PR02101">
    <property type="entry name" value="A8IMIRACIDIA"/>
</dbReference>
<reference key="1">
    <citation type="journal article" date="1989" name="Mol. Biochem. Parasitol.">
        <title>Characterization of a large gene family in Schistosoma japonicum that encodes an immunogenic miracidial antigen.</title>
        <authorList>
            <person name="Scallon B.J."/>
            <person name="Bogitsh B.J."/>
            <person name="Carter C.E."/>
        </authorList>
    </citation>
    <scope>NUCLEOTIDE SEQUENCE [GENOMIC DNA]</scope>
    <source>
        <strain>Philippines</strain>
    </source>
</reference>
<comment type="developmental stage">
    <text>Miracidia.</text>
</comment>
<comment type="similarity">
    <text evidence="2">Belongs to the immunogenic miracidial antigen family.</text>
</comment>
<protein>
    <recommendedName>
        <fullName>Immunogenic miracidial antigen 8I</fullName>
    </recommendedName>
</protein>
<accession>P13524</accession>